<gene>
    <name evidence="2" type="primary">rnb</name>
    <name type="ordered locus">BCc_168</name>
</gene>
<feature type="chain" id="PRO_0000409534" description="Exoribonuclease 2">
    <location>
        <begin position="1"/>
        <end position="648"/>
    </location>
</feature>
<feature type="domain" description="RNB" evidence="1">
    <location>
        <begin position="191"/>
        <end position="518"/>
    </location>
</feature>
<feature type="domain" description="S1 motif" evidence="2">
    <location>
        <begin position="565"/>
        <end position="647"/>
    </location>
</feature>
<evidence type="ECO:0000255" key="1"/>
<evidence type="ECO:0000255" key="2">
    <source>
        <dbReference type="HAMAP-Rule" id="MF_01036"/>
    </source>
</evidence>
<proteinExistence type="inferred from homology"/>
<keyword id="KW-0963">Cytoplasm</keyword>
<keyword id="KW-0269">Exonuclease</keyword>
<keyword id="KW-0378">Hydrolase</keyword>
<keyword id="KW-0540">Nuclease</keyword>
<keyword id="KW-1185">Reference proteome</keyword>
<keyword id="KW-0694">RNA-binding</keyword>
<sequence length="648" mass="76184">MFYNNPLLIKLKNKLYKKKKIEGIVKSTTKGFGFLEVDSKKTYFIPSKNMKKVIHGDRIIGLIKLENNKEIVYPKILIEPFLKKFIGSILKKNNIIYIQANYPYIKDLIFYRYKTSVFRSWKNGDWVIAELDTHSLRDNNHFSINILKFISEKNDPLTPWNVILSKYNLEKKSPKINFNYILNNNNLKDKRIDLTYLDFITIDNSNTQDIDDALFVKKTKKNKLTLIVAIADPTEYILINTKVDDIAKKRVFTNYLPGFNISMLPKEFSEDLCSLKPHVKRPVLACKIIIDNEGKILMKKTKFFLAWIESKGKLSYQNVSNWLEKLGNWQPDNKKIKKQILLLYKMYKIRNMWRKKNALIFPDNIEYKFHLSKTWEILNISVEKRSIAHKIVEESMISANICAASFLKKKLGFGLYNSHSGFDTFNAKNAINFLKKYNIIFTLEEIMTLSGFCKLKRKLNKLSNKYINYRIQKFQSFGEISLIPKPHFSLGLPYYATWTSPIRKYSDMINHRLIKSIIIGKKKISPPDTNIIPQIIHRKYKIRMALKEIEEWLYFKYYNKKKSDKKKYQANIIDISKGGIKARLLKTGAYIFIPVTYIHKIRHELNLNSEKGIIYIKNKIYYKVSDIIIVSLLKINNGNKKIIATMIN</sequence>
<accession>Q057Q9</accession>
<protein>
    <recommendedName>
        <fullName evidence="2">Exoribonuclease 2</fullName>
        <ecNumber evidence="2">3.1.13.1</ecNumber>
    </recommendedName>
    <alternativeName>
        <fullName evidence="2">Exoribonuclease II</fullName>
        <shortName evidence="2">RNase II</shortName>
        <shortName evidence="2">Ribonuclease II</shortName>
    </alternativeName>
</protein>
<dbReference type="EC" id="3.1.13.1" evidence="2"/>
<dbReference type="EMBL" id="CP000263">
    <property type="protein sequence ID" value="ABJ90640.1"/>
    <property type="molecule type" value="Genomic_DNA"/>
</dbReference>
<dbReference type="RefSeq" id="WP_011672559.1">
    <property type="nucleotide sequence ID" value="NC_008513.1"/>
</dbReference>
<dbReference type="SMR" id="Q057Q9"/>
<dbReference type="STRING" id="372461.BCc_168"/>
<dbReference type="KEGG" id="bcc:BCc_168"/>
<dbReference type="eggNOG" id="COG4776">
    <property type="taxonomic scope" value="Bacteria"/>
</dbReference>
<dbReference type="HOGENOM" id="CLU_002333_7_3_6"/>
<dbReference type="OrthoDB" id="9764149at2"/>
<dbReference type="Proteomes" id="UP000000669">
    <property type="component" value="Chromosome"/>
</dbReference>
<dbReference type="GO" id="GO:0005829">
    <property type="term" value="C:cytosol"/>
    <property type="evidence" value="ECO:0007669"/>
    <property type="project" value="UniProtKB-ARBA"/>
</dbReference>
<dbReference type="GO" id="GO:0008859">
    <property type="term" value="F:exoribonuclease II activity"/>
    <property type="evidence" value="ECO:0007669"/>
    <property type="project" value="UniProtKB-UniRule"/>
</dbReference>
<dbReference type="GO" id="GO:0003723">
    <property type="term" value="F:RNA binding"/>
    <property type="evidence" value="ECO:0007669"/>
    <property type="project" value="UniProtKB-KW"/>
</dbReference>
<dbReference type="GO" id="GO:0006402">
    <property type="term" value="P:mRNA catabolic process"/>
    <property type="evidence" value="ECO:0007669"/>
    <property type="project" value="UniProtKB-UniRule"/>
</dbReference>
<dbReference type="Gene3D" id="2.40.50.640">
    <property type="match status" value="1"/>
</dbReference>
<dbReference type="Gene3D" id="2.40.50.140">
    <property type="entry name" value="Nucleic acid-binding proteins"/>
    <property type="match status" value="2"/>
</dbReference>
<dbReference type="HAMAP" id="MF_01036">
    <property type="entry name" value="RNase_II"/>
    <property type="match status" value="1"/>
</dbReference>
<dbReference type="InterPro" id="IPR011129">
    <property type="entry name" value="CSD"/>
</dbReference>
<dbReference type="InterPro" id="IPR012340">
    <property type="entry name" value="NA-bd_OB-fold"/>
</dbReference>
<dbReference type="InterPro" id="IPR013223">
    <property type="entry name" value="RNase_B_OB_dom"/>
</dbReference>
<dbReference type="InterPro" id="IPR011804">
    <property type="entry name" value="RNase_II"/>
</dbReference>
<dbReference type="InterPro" id="IPR001900">
    <property type="entry name" value="RNase_II/R"/>
</dbReference>
<dbReference type="InterPro" id="IPR022966">
    <property type="entry name" value="RNase_II/R_CS"/>
</dbReference>
<dbReference type="InterPro" id="IPR004476">
    <property type="entry name" value="RNase_II/RNase_R"/>
</dbReference>
<dbReference type="InterPro" id="IPR050180">
    <property type="entry name" value="RNR_Ribonuclease"/>
</dbReference>
<dbReference type="NCBIfam" id="TIGR00358">
    <property type="entry name" value="3_prime_RNase"/>
    <property type="match status" value="1"/>
</dbReference>
<dbReference type="NCBIfam" id="NF003455">
    <property type="entry name" value="PRK05054.1"/>
    <property type="match status" value="1"/>
</dbReference>
<dbReference type="NCBIfam" id="TIGR02062">
    <property type="entry name" value="RNase_B"/>
    <property type="match status" value="1"/>
</dbReference>
<dbReference type="PANTHER" id="PTHR23355:SF37">
    <property type="entry name" value="EXORIBONUCLEASE 2"/>
    <property type="match status" value="1"/>
</dbReference>
<dbReference type="PANTHER" id="PTHR23355">
    <property type="entry name" value="RIBONUCLEASE"/>
    <property type="match status" value="1"/>
</dbReference>
<dbReference type="Pfam" id="PF08206">
    <property type="entry name" value="OB_RNB"/>
    <property type="match status" value="1"/>
</dbReference>
<dbReference type="Pfam" id="PF00773">
    <property type="entry name" value="RNB"/>
    <property type="match status" value="1"/>
</dbReference>
<dbReference type="SMART" id="SM00357">
    <property type="entry name" value="CSP"/>
    <property type="match status" value="1"/>
</dbReference>
<dbReference type="SMART" id="SM00955">
    <property type="entry name" value="RNB"/>
    <property type="match status" value="1"/>
</dbReference>
<dbReference type="SUPFAM" id="SSF50249">
    <property type="entry name" value="Nucleic acid-binding proteins"/>
    <property type="match status" value="4"/>
</dbReference>
<dbReference type="PROSITE" id="PS01175">
    <property type="entry name" value="RIBONUCLEASE_II"/>
    <property type="match status" value="1"/>
</dbReference>
<organism>
    <name type="scientific">Buchnera aphidicola subsp. Cinara cedri (strain Cc)</name>
    <dbReference type="NCBI Taxonomy" id="372461"/>
    <lineage>
        <taxon>Bacteria</taxon>
        <taxon>Pseudomonadati</taxon>
        <taxon>Pseudomonadota</taxon>
        <taxon>Gammaproteobacteria</taxon>
        <taxon>Enterobacterales</taxon>
        <taxon>Erwiniaceae</taxon>
        <taxon>Buchnera</taxon>
    </lineage>
</organism>
<name>RNB_BUCCC</name>
<reference key="1">
    <citation type="journal article" date="2006" name="Science">
        <title>A small microbial genome: the end of a long symbiotic relationship?</title>
        <authorList>
            <person name="Perez-Brocal V."/>
            <person name="Gil R."/>
            <person name="Ramos S."/>
            <person name="Lamelas A."/>
            <person name="Postigo M."/>
            <person name="Michelena J.M."/>
            <person name="Silva F.J."/>
            <person name="Moya A."/>
            <person name="Latorre A."/>
        </authorList>
    </citation>
    <scope>NUCLEOTIDE SEQUENCE [LARGE SCALE GENOMIC DNA]</scope>
    <source>
        <strain>Cc</strain>
    </source>
</reference>
<comment type="function">
    <text evidence="2">Involved in mRNA degradation. Hydrolyzes single-stranded polyribonucleotides processively in the 3' to 5' direction.</text>
</comment>
<comment type="catalytic activity">
    <reaction evidence="2">
        <text>Exonucleolytic cleavage in the 3'- to 5'-direction to yield nucleoside 5'-phosphates.</text>
        <dbReference type="EC" id="3.1.13.1"/>
    </reaction>
</comment>
<comment type="subcellular location">
    <subcellularLocation>
        <location evidence="2">Cytoplasm</location>
    </subcellularLocation>
</comment>
<comment type="similarity">
    <text evidence="2">Belongs to the RNR ribonuclease family. RNase II subfamily.</text>
</comment>